<name>PHS_PSEP7</name>
<comment type="catalytic activity">
    <reaction evidence="1">
        <text>(4aS,6R)-4a-hydroxy-L-erythro-5,6,7,8-tetrahydrobiopterin = (6R)-L-erythro-6,7-dihydrobiopterin + H2O</text>
        <dbReference type="Rhea" id="RHEA:11920"/>
        <dbReference type="ChEBI" id="CHEBI:15377"/>
        <dbReference type="ChEBI" id="CHEBI:15642"/>
        <dbReference type="ChEBI" id="CHEBI:43120"/>
        <dbReference type="EC" id="4.2.1.96"/>
    </reaction>
</comment>
<comment type="similarity">
    <text evidence="1">Belongs to the pterin-4-alpha-carbinolamine dehydratase family.</text>
</comment>
<sequence>MTALTQAHCEACRADAPHVSDEELPVLLRQIPDWNIEVRDGIMQLEKVYLFKNFRHALAFTNAIGEISEAEGHHPGLLTEWGKVTVTWWSHSIKGLHRNDFIMAARTDEVAKTAEGRK</sequence>
<proteinExistence type="inferred from homology"/>
<dbReference type="EC" id="4.2.1.96" evidence="1"/>
<dbReference type="EMBL" id="CP000744">
    <property type="protein sequence ID" value="ABR84800.1"/>
    <property type="molecule type" value="Genomic_DNA"/>
</dbReference>
<dbReference type="RefSeq" id="WP_003149893.1">
    <property type="nucleotide sequence ID" value="NC_009656.1"/>
</dbReference>
<dbReference type="SMR" id="A6VAA4"/>
<dbReference type="GeneID" id="77222564"/>
<dbReference type="KEGG" id="pap:PSPA7_4645"/>
<dbReference type="HOGENOM" id="CLU_081974_2_2_6"/>
<dbReference type="Proteomes" id="UP000001582">
    <property type="component" value="Chromosome"/>
</dbReference>
<dbReference type="GO" id="GO:0008124">
    <property type="term" value="F:4-alpha-hydroxytetrahydrobiopterin dehydratase activity"/>
    <property type="evidence" value="ECO:0007669"/>
    <property type="project" value="UniProtKB-UniRule"/>
</dbReference>
<dbReference type="GO" id="GO:0006729">
    <property type="term" value="P:tetrahydrobiopterin biosynthetic process"/>
    <property type="evidence" value="ECO:0007669"/>
    <property type="project" value="InterPro"/>
</dbReference>
<dbReference type="CDD" id="cd00913">
    <property type="entry name" value="PCD_DCoH_subfamily_a"/>
    <property type="match status" value="1"/>
</dbReference>
<dbReference type="Gene3D" id="3.30.1360.20">
    <property type="entry name" value="Transcriptional coactivator/pterin dehydratase"/>
    <property type="match status" value="1"/>
</dbReference>
<dbReference type="HAMAP" id="MF_00434">
    <property type="entry name" value="Pterin_4_alpha"/>
    <property type="match status" value="1"/>
</dbReference>
<dbReference type="InterPro" id="IPR036428">
    <property type="entry name" value="PCD_sf"/>
</dbReference>
<dbReference type="InterPro" id="IPR050376">
    <property type="entry name" value="Pterin-4-alpha-carb_dehyd"/>
</dbReference>
<dbReference type="InterPro" id="IPR001533">
    <property type="entry name" value="Pterin_deHydtase"/>
</dbReference>
<dbReference type="NCBIfam" id="NF002016">
    <property type="entry name" value="PRK00823.1-1"/>
    <property type="match status" value="1"/>
</dbReference>
<dbReference type="PANTHER" id="PTHR42805">
    <property type="entry name" value="PTERIN-4-ALPHA-CARBINOLAMINE DEHYDRATASE-RELATED"/>
    <property type="match status" value="1"/>
</dbReference>
<dbReference type="PANTHER" id="PTHR42805:SF1">
    <property type="entry name" value="PTERIN-4-ALPHA-CARBINOLAMINE DEHYDRATASE-RELATED"/>
    <property type="match status" value="1"/>
</dbReference>
<dbReference type="Pfam" id="PF01329">
    <property type="entry name" value="Pterin_4a"/>
    <property type="match status" value="1"/>
</dbReference>
<dbReference type="SUPFAM" id="SSF55248">
    <property type="entry name" value="PCD-like"/>
    <property type="match status" value="1"/>
</dbReference>
<evidence type="ECO:0000255" key="1">
    <source>
        <dbReference type="HAMAP-Rule" id="MF_00434"/>
    </source>
</evidence>
<keyword id="KW-0456">Lyase</keyword>
<accession>A6VAA4</accession>
<organism>
    <name type="scientific">Pseudomonas paraeruginosa (strain DSM 24068 / PA7)</name>
    <name type="common">Pseudomonas aeruginosa (strain PA7)</name>
    <dbReference type="NCBI Taxonomy" id="381754"/>
    <lineage>
        <taxon>Bacteria</taxon>
        <taxon>Pseudomonadati</taxon>
        <taxon>Pseudomonadota</taxon>
        <taxon>Gammaproteobacteria</taxon>
        <taxon>Pseudomonadales</taxon>
        <taxon>Pseudomonadaceae</taxon>
        <taxon>Pseudomonas</taxon>
        <taxon>Pseudomonas paraeruginosa</taxon>
    </lineage>
</organism>
<protein>
    <recommendedName>
        <fullName evidence="1">Putative pterin-4-alpha-carbinolamine dehydratase</fullName>
        <shortName evidence="1">PHS</shortName>
        <ecNumber evidence="1">4.2.1.96</ecNumber>
    </recommendedName>
    <alternativeName>
        <fullName evidence="1">4-alpha-hydroxy-tetrahydropterin dehydratase</fullName>
    </alternativeName>
    <alternativeName>
        <fullName evidence="1">Pterin carbinolamine dehydratase</fullName>
        <shortName evidence="1">PCD</shortName>
    </alternativeName>
</protein>
<reference key="1">
    <citation type="submission" date="2007-06" db="EMBL/GenBank/DDBJ databases">
        <authorList>
            <person name="Dodson R.J."/>
            <person name="Harkins D."/>
            <person name="Paulsen I.T."/>
        </authorList>
    </citation>
    <scope>NUCLEOTIDE SEQUENCE [LARGE SCALE GENOMIC DNA]</scope>
    <source>
        <strain>DSM 24068 / PA7</strain>
    </source>
</reference>
<gene>
    <name type="ordered locus">PSPA7_4645</name>
</gene>
<feature type="chain" id="PRO_1000050435" description="Putative pterin-4-alpha-carbinolamine dehydratase">
    <location>
        <begin position="1"/>
        <end position="118"/>
    </location>
</feature>